<keyword id="KW-0903">Direct protein sequencing</keyword>
<comment type="function">
    <text>Structural protein of the sulfur globules, which are intracellular globules that serve for sulfur storage in purple sulfur bacteria.</text>
</comment>
<comment type="subunit">
    <text>The protein envelope of the sulfur globules is composed of the three different proteins TR0, TR1 and TR2.</text>
</comment>
<comment type="similarity">
    <text evidence="1">To C.vinosum CV1 and CV2.</text>
</comment>
<protein>
    <recommendedName>
        <fullName>Sulfur globule protein TR0</fullName>
    </recommendedName>
</protein>
<name>SGP1_THIRO</name>
<reference key="1">
    <citation type="journal article" date="1995" name="Arch. Microbiol.">
        <title>Isolation and characterization of sulfur globule proteins from Chromatium vinosum and Thiocapsa roseopersicina.</title>
        <authorList>
            <person name="Brune D.C."/>
        </authorList>
    </citation>
    <scope>PROTEIN SEQUENCE</scope>
    <scope>CHARACTERIZATION</scope>
    <source>
        <strain>SMG219</strain>
    </source>
</reference>
<sequence>WWGPGYGGYGPGYGSGLGDAFSDMFGDGYGDFNFGMSGGG</sequence>
<organism>
    <name type="scientific">Thiocapsa roseopersicina</name>
    <dbReference type="NCBI Taxonomy" id="1058"/>
    <lineage>
        <taxon>Bacteria</taxon>
        <taxon>Pseudomonadati</taxon>
        <taxon>Pseudomonadota</taxon>
        <taxon>Gammaproteobacteria</taxon>
        <taxon>Chromatiales</taxon>
        <taxon>Chromatiaceae</taxon>
        <taxon>Thiocapsa</taxon>
    </lineage>
</organism>
<accession>P56623</accession>
<proteinExistence type="evidence at protein level"/>
<evidence type="ECO:0000305" key="1"/>
<feature type="chain" id="PRO_0000097720" description="Sulfur globule protein TR0">
    <location>
        <begin position="1"/>
        <end position="40" status="greater than"/>
    </location>
</feature>
<feature type="non-terminal residue">
    <location>
        <position position="40"/>
    </location>
</feature>
<dbReference type="InterPro" id="IPR035173">
    <property type="entry name" value="SGP"/>
</dbReference>
<dbReference type="Pfam" id="PF17228">
    <property type="entry name" value="SGP"/>
    <property type="match status" value="1"/>
</dbReference>